<evidence type="ECO:0000255" key="1">
    <source>
        <dbReference type="HAMAP-Rule" id="MF_01379"/>
    </source>
</evidence>
<evidence type="ECO:0000269" key="2">
    <source>
    </source>
</evidence>
<evidence type="ECO:0000303" key="3">
    <source ref="1"/>
</evidence>
<evidence type="ECO:0000305" key="4"/>
<feature type="initiator methionine" description="Removed" evidence="1">
    <location>
        <position position="1"/>
    </location>
</feature>
<feature type="chain" id="PRO_0000090473" description="Photosystem II protein D1" evidence="1">
    <location>
        <begin position="2"/>
        <end position="344"/>
    </location>
</feature>
<feature type="propeptide" id="PRO_0000316466" evidence="1">
    <location>
        <begin position="345"/>
        <end position="353"/>
    </location>
</feature>
<feature type="transmembrane region" description="Helical" evidence="1">
    <location>
        <begin position="29"/>
        <end position="46"/>
    </location>
</feature>
<feature type="transmembrane region" description="Helical" evidence="1">
    <location>
        <begin position="118"/>
        <end position="133"/>
    </location>
</feature>
<feature type="transmembrane region" description="Helical" evidence="1">
    <location>
        <begin position="142"/>
        <end position="156"/>
    </location>
</feature>
<feature type="transmembrane region" description="Helical" evidence="1">
    <location>
        <begin position="197"/>
        <end position="218"/>
    </location>
</feature>
<feature type="transmembrane region" description="Helical" evidence="1">
    <location>
        <begin position="274"/>
        <end position="288"/>
    </location>
</feature>
<feature type="binding site" description="axial binding residue" evidence="1">
    <location>
        <position position="118"/>
    </location>
    <ligand>
        <name>chlorophyll a</name>
        <dbReference type="ChEBI" id="CHEBI:58416"/>
        <label>ChlzD1</label>
    </ligand>
    <ligandPart>
        <name>Mg</name>
        <dbReference type="ChEBI" id="CHEBI:25107"/>
    </ligandPart>
</feature>
<feature type="binding site" evidence="1">
    <location>
        <position position="126"/>
    </location>
    <ligand>
        <name>pheophytin a</name>
        <dbReference type="ChEBI" id="CHEBI:136840"/>
        <label>D1</label>
    </ligand>
</feature>
<feature type="binding site" evidence="1">
    <location>
        <position position="170"/>
    </location>
    <ligand>
        <name>[CaMn4O5] cluster</name>
        <dbReference type="ChEBI" id="CHEBI:189552"/>
    </ligand>
</feature>
<feature type="binding site" evidence="1">
    <location>
        <position position="189"/>
    </location>
    <ligand>
        <name>[CaMn4O5] cluster</name>
        <dbReference type="ChEBI" id="CHEBI:189552"/>
    </ligand>
</feature>
<feature type="binding site" description="axial binding residue" evidence="1">
    <location>
        <position position="198"/>
    </location>
    <ligand>
        <name>chlorophyll a</name>
        <dbReference type="ChEBI" id="CHEBI:58416"/>
        <label>PD1</label>
    </ligand>
    <ligandPart>
        <name>Mg</name>
        <dbReference type="ChEBI" id="CHEBI:25107"/>
    </ligandPart>
</feature>
<feature type="binding site" evidence="1">
    <location>
        <position position="215"/>
    </location>
    <ligand>
        <name>a quinone</name>
        <dbReference type="ChEBI" id="CHEBI:132124"/>
        <label>B</label>
    </ligand>
</feature>
<feature type="binding site" evidence="1">
    <location>
        <position position="215"/>
    </location>
    <ligand>
        <name>Fe cation</name>
        <dbReference type="ChEBI" id="CHEBI:24875"/>
        <note>ligand shared with heterodimeric partner</note>
    </ligand>
</feature>
<feature type="binding site" evidence="1">
    <location>
        <begin position="264"/>
        <end position="265"/>
    </location>
    <ligand>
        <name>a quinone</name>
        <dbReference type="ChEBI" id="CHEBI:132124"/>
        <label>B</label>
    </ligand>
</feature>
<feature type="binding site" evidence="1">
    <location>
        <position position="272"/>
    </location>
    <ligand>
        <name>Fe cation</name>
        <dbReference type="ChEBI" id="CHEBI:24875"/>
        <note>ligand shared with heterodimeric partner</note>
    </ligand>
</feature>
<feature type="binding site" evidence="1">
    <location>
        <position position="332"/>
    </location>
    <ligand>
        <name>[CaMn4O5] cluster</name>
        <dbReference type="ChEBI" id="CHEBI:189552"/>
    </ligand>
</feature>
<feature type="binding site" evidence="1">
    <location>
        <position position="333"/>
    </location>
    <ligand>
        <name>[CaMn4O5] cluster</name>
        <dbReference type="ChEBI" id="CHEBI:189552"/>
    </ligand>
</feature>
<feature type="binding site" evidence="1">
    <location>
        <position position="342"/>
    </location>
    <ligand>
        <name>[CaMn4O5] cluster</name>
        <dbReference type="ChEBI" id="CHEBI:189552"/>
    </ligand>
</feature>
<feature type="binding site" evidence="1">
    <location>
        <position position="344"/>
    </location>
    <ligand>
        <name>[CaMn4O5] cluster</name>
        <dbReference type="ChEBI" id="CHEBI:189552"/>
    </ligand>
</feature>
<feature type="site" description="Tyrosine radical intermediate" evidence="1">
    <location>
        <position position="161"/>
    </location>
</feature>
<feature type="site" description="Stabilizes free radical intermediate" evidence="1">
    <location>
        <position position="190"/>
    </location>
</feature>
<feature type="site" description="Cleavage; by CTPA" evidence="1">
    <location>
        <begin position="344"/>
        <end position="345"/>
    </location>
</feature>
<feature type="modified residue" description="N-acetylthreonine" evidence="1">
    <location>
        <position position="2"/>
    </location>
</feature>
<feature type="modified residue" description="Phosphothreonine" evidence="1">
    <location>
        <position position="2"/>
    </location>
</feature>
<feature type="sequence variant" description="In atrazine-resistant cell line." evidence="2">
    <original>S</original>
    <variation>T</variation>
    <location>
        <position position="264"/>
    </location>
</feature>
<feature type="sequence conflict" description="In Ref. 2; CAA25252." evidence="4" ref="2">
    <original>H</original>
    <variation>D</variation>
    <location>
        <position position="118"/>
    </location>
</feature>
<reference key="1">
    <citation type="journal article" date="1984" name="Mol. Gen. Genet.">
        <title>Nucleotide sequence and transcription of the gene for the 32,000 dalton thylakoid membrane protein from Nicotiana tabacum.</title>
        <authorList>
            <person name="Sugita M."/>
            <person name="Sugiura M."/>
        </authorList>
    </citation>
    <scope>NUCLEOTIDE SEQUENCE [GENOMIC DNA]</scope>
</reference>
<reference key="2">
    <citation type="journal article" date="1986" name="EMBO J.">
        <title>The complete nucleotide sequence of the tobacco chloroplast genome: its gene organization and expression.</title>
        <authorList>
            <person name="Shinozaki K."/>
            <person name="Ohme M."/>
            <person name="Tanaka M."/>
            <person name="Wakasugi T."/>
            <person name="Hayashida N."/>
            <person name="Matsubayashi T."/>
            <person name="Zaita N."/>
            <person name="Chunwongse J."/>
            <person name="Obokata J."/>
            <person name="Yamaguchi-Shinozaki K."/>
            <person name="Ohto C."/>
            <person name="Torazawa K."/>
            <person name="Meng B.-Y."/>
            <person name="Sugita M."/>
            <person name="Deno H."/>
            <person name="Kamogashira T."/>
            <person name="Yamada K."/>
            <person name="Kusuda J."/>
            <person name="Takaiwa F."/>
            <person name="Kato A."/>
            <person name="Tohdoh N."/>
            <person name="Shimada H."/>
            <person name="Sugiura M."/>
        </authorList>
    </citation>
    <scope>NUCLEOTIDE SEQUENCE [LARGE SCALE GENOMIC DNA]</scope>
    <source>
        <strain>cv. Bright Yellow 4</strain>
    </source>
</reference>
<reference key="3">
    <citation type="journal article" date="1988" name="Mol. Gen. Genet.">
        <title>Selection of an atrazine-resistant tobacco cell line having a mutant psbA gene.</title>
        <authorList>
            <person name="Sato F."/>
            <person name="Shigematsu Y."/>
            <person name="Yamada Y."/>
        </authorList>
    </citation>
    <scope>NUCLEOTIDE SEQUENCE [GENOMIC DNA]</scope>
    <scope>VARIANT THR-264</scope>
    <source>
        <strain>cv. Samsun NN</strain>
    </source>
</reference>
<keyword id="KW-0007">Acetylation</keyword>
<keyword id="KW-0106">Calcium</keyword>
<keyword id="KW-0148">Chlorophyll</keyword>
<keyword id="KW-0150">Chloroplast</keyword>
<keyword id="KW-0157">Chromophore</keyword>
<keyword id="KW-0249">Electron transport</keyword>
<keyword id="KW-0359">Herbicide resistance</keyword>
<keyword id="KW-0408">Iron</keyword>
<keyword id="KW-0460">Magnesium</keyword>
<keyword id="KW-0464">Manganese</keyword>
<keyword id="KW-0472">Membrane</keyword>
<keyword id="KW-0479">Metal-binding</keyword>
<keyword id="KW-0560">Oxidoreductase</keyword>
<keyword id="KW-0597">Phosphoprotein</keyword>
<keyword id="KW-0602">Photosynthesis</keyword>
<keyword id="KW-0604">Photosystem II</keyword>
<keyword id="KW-0934">Plastid</keyword>
<keyword id="KW-1185">Reference proteome</keyword>
<keyword id="KW-0793">Thylakoid</keyword>
<keyword id="KW-0812">Transmembrane</keyword>
<keyword id="KW-1133">Transmembrane helix</keyword>
<keyword id="KW-0813">Transport</keyword>
<proteinExistence type="inferred from homology"/>
<dbReference type="EC" id="1.10.3.9" evidence="1"/>
<dbReference type="EMBL" id="X00616">
    <property type="protein sequence ID" value="CAA25252.1"/>
    <property type="molecule type" value="Genomic_DNA"/>
</dbReference>
<dbReference type="EMBL" id="Z00044">
    <property type="protein sequence ID" value="CAA77338.1"/>
    <property type="molecule type" value="Genomic_DNA"/>
</dbReference>
<dbReference type="EMBL" id="AB025940">
    <property type="protein sequence ID" value="BAA76900.1"/>
    <property type="molecule type" value="Genomic_DNA"/>
</dbReference>
<dbReference type="PIR" id="A03459">
    <property type="entry name" value="FMNT32"/>
</dbReference>
<dbReference type="RefSeq" id="NP_054477.1">
    <property type="nucleotide sequence ID" value="NC_001879.2"/>
</dbReference>
<dbReference type="SMR" id="P69556"/>
<dbReference type="GeneID" id="800514"/>
<dbReference type="KEGG" id="nta:800514"/>
<dbReference type="OMA" id="CQWVTDT"/>
<dbReference type="OrthoDB" id="143at2759"/>
<dbReference type="Proteomes" id="UP000084051">
    <property type="component" value="Unplaced"/>
</dbReference>
<dbReference type="GO" id="GO:0009535">
    <property type="term" value="C:chloroplast thylakoid membrane"/>
    <property type="evidence" value="ECO:0007669"/>
    <property type="project" value="UniProtKB-SubCell"/>
</dbReference>
<dbReference type="GO" id="GO:0009523">
    <property type="term" value="C:photosystem II"/>
    <property type="evidence" value="ECO:0007669"/>
    <property type="project" value="UniProtKB-KW"/>
</dbReference>
<dbReference type="GO" id="GO:0016168">
    <property type="term" value="F:chlorophyll binding"/>
    <property type="evidence" value="ECO:0007669"/>
    <property type="project" value="UniProtKB-UniRule"/>
</dbReference>
<dbReference type="GO" id="GO:0045156">
    <property type="term" value="F:electron transporter, transferring electrons within the cyclic electron transport pathway of photosynthesis activity"/>
    <property type="evidence" value="ECO:0007669"/>
    <property type="project" value="InterPro"/>
</dbReference>
<dbReference type="GO" id="GO:0005506">
    <property type="term" value="F:iron ion binding"/>
    <property type="evidence" value="ECO:0007669"/>
    <property type="project" value="UniProtKB-UniRule"/>
</dbReference>
<dbReference type="GO" id="GO:0016682">
    <property type="term" value="F:oxidoreductase activity, acting on diphenols and related substances as donors, oxygen as acceptor"/>
    <property type="evidence" value="ECO:0007669"/>
    <property type="project" value="UniProtKB-UniRule"/>
</dbReference>
<dbReference type="GO" id="GO:0010242">
    <property type="term" value="F:oxygen evolving activity"/>
    <property type="evidence" value="ECO:0007669"/>
    <property type="project" value="UniProtKB-EC"/>
</dbReference>
<dbReference type="GO" id="GO:0009772">
    <property type="term" value="P:photosynthetic electron transport in photosystem II"/>
    <property type="evidence" value="ECO:0007669"/>
    <property type="project" value="InterPro"/>
</dbReference>
<dbReference type="GO" id="GO:0009635">
    <property type="term" value="P:response to herbicide"/>
    <property type="evidence" value="ECO:0007669"/>
    <property type="project" value="UniProtKB-KW"/>
</dbReference>
<dbReference type="CDD" id="cd09289">
    <property type="entry name" value="Photosystem-II_D1"/>
    <property type="match status" value="1"/>
</dbReference>
<dbReference type="FunFam" id="1.20.85.10:FF:000002">
    <property type="entry name" value="Photosystem II protein D1"/>
    <property type="match status" value="1"/>
</dbReference>
<dbReference type="Gene3D" id="1.20.85.10">
    <property type="entry name" value="Photosystem II protein D1-like"/>
    <property type="match status" value="1"/>
</dbReference>
<dbReference type="HAMAP" id="MF_01379">
    <property type="entry name" value="PSII_PsbA_D1"/>
    <property type="match status" value="1"/>
</dbReference>
<dbReference type="InterPro" id="IPR055266">
    <property type="entry name" value="D1/D2"/>
</dbReference>
<dbReference type="InterPro" id="IPR036854">
    <property type="entry name" value="Photo_II_D1/D2_sf"/>
</dbReference>
<dbReference type="InterPro" id="IPR000484">
    <property type="entry name" value="Photo_RC_L/M"/>
</dbReference>
<dbReference type="InterPro" id="IPR055265">
    <property type="entry name" value="Photo_RC_L/M_CS"/>
</dbReference>
<dbReference type="InterPro" id="IPR005867">
    <property type="entry name" value="PSII_D1"/>
</dbReference>
<dbReference type="NCBIfam" id="TIGR01151">
    <property type="entry name" value="psbA"/>
    <property type="match status" value="1"/>
</dbReference>
<dbReference type="PANTHER" id="PTHR33149:SF12">
    <property type="entry name" value="PHOTOSYSTEM II D2 PROTEIN"/>
    <property type="match status" value="1"/>
</dbReference>
<dbReference type="PANTHER" id="PTHR33149">
    <property type="entry name" value="PHOTOSYSTEM II PROTEIN D1"/>
    <property type="match status" value="1"/>
</dbReference>
<dbReference type="Pfam" id="PF00124">
    <property type="entry name" value="Photo_RC"/>
    <property type="match status" value="1"/>
</dbReference>
<dbReference type="PRINTS" id="PR00256">
    <property type="entry name" value="REACTNCENTRE"/>
</dbReference>
<dbReference type="SUPFAM" id="SSF81483">
    <property type="entry name" value="Bacterial photosystem II reaction centre, L and M subunits"/>
    <property type="match status" value="1"/>
</dbReference>
<dbReference type="PROSITE" id="PS00244">
    <property type="entry name" value="REACTION_CENTER"/>
    <property type="match status" value="1"/>
</dbReference>
<name>PSBA_TOBAC</name>
<accession>P69556</accession>
<accession>P04848</accession>
<accession>Q9TM67</accession>
<comment type="function">
    <text evidence="1">Photosystem II (PSII) is a light-driven water:plastoquinone oxidoreductase that uses light energy to abstract electrons from H(2)O, generating O(2) and a proton gradient subsequently used for ATP formation. It consists of a core antenna complex that captures photons, and an electron transfer chain that converts photonic excitation into a charge separation. The D1/D2 (PsbA/PsbD) reaction center heterodimer binds P680, the primary electron donor of PSII as well as several subsequent electron acceptors.</text>
</comment>
<comment type="catalytic activity">
    <reaction evidence="1">
        <text>2 a plastoquinone + 4 hnu + 2 H2O = 2 a plastoquinol + O2</text>
        <dbReference type="Rhea" id="RHEA:36359"/>
        <dbReference type="Rhea" id="RHEA-COMP:9561"/>
        <dbReference type="Rhea" id="RHEA-COMP:9562"/>
        <dbReference type="ChEBI" id="CHEBI:15377"/>
        <dbReference type="ChEBI" id="CHEBI:15379"/>
        <dbReference type="ChEBI" id="CHEBI:17757"/>
        <dbReference type="ChEBI" id="CHEBI:30212"/>
        <dbReference type="ChEBI" id="CHEBI:62192"/>
        <dbReference type="EC" id="1.10.3.9"/>
    </reaction>
</comment>
<comment type="cofactor">
    <text evidence="1">The D1/D2 heterodimer binds P680, chlorophylls that are the primary electron donor of PSII, and subsequent electron acceptors. It shares a non-heme iron and each subunit binds pheophytin, quinone, additional chlorophylls, carotenoids and lipids. D1 provides most of the ligands for the Mn4-Ca-O5 cluster of the oxygen-evolving complex (OEC). There is also a Cl(-1) ion associated with D1 and D2, which is required for oxygen evolution. The PSII complex binds additional chlorophylls, carotenoids and specific lipids.</text>
</comment>
<comment type="subunit">
    <text evidence="1">PSII is composed of 1 copy each of membrane proteins PsbA, PsbB, PsbC, PsbD, PsbE, PsbF, PsbH, PsbI, PsbJ, PsbK, PsbL, PsbM, PsbT, PsbX, PsbY, PsbZ, Psb30/Ycf12, at least 3 peripheral proteins of the oxygen-evolving complex and a large number of cofactors. It forms dimeric complexes.</text>
</comment>
<comment type="subcellular location">
    <subcellularLocation>
        <location evidence="1">Plastid</location>
        <location evidence="1">Chloroplast thylakoid membrane</location>
        <topology evidence="1">Multi-pass membrane protein</topology>
    </subcellularLocation>
</comment>
<comment type="PTM">
    <text evidence="1">Tyr-161 forms a radical intermediate that is referred to as redox-active TyrZ, YZ or Y-Z.</text>
</comment>
<comment type="PTM">
    <text evidence="1">C-terminally processed by CTPA; processing is essential to allow assembly of the oxygen-evolving complex and thus photosynthetic growth.</text>
</comment>
<comment type="miscellaneous">
    <text evidence="1">2 of the reaction center chlorophylls (ChlD1 and ChlD2) are entirely coordinated by water.</text>
</comment>
<comment type="miscellaneous">
    <text evidence="1">Herbicides such as atrazine, BNT, diuron or ioxynil bind in the Q(B) binding site and block subsequent electron transfer.</text>
</comment>
<comment type="similarity">
    <text evidence="1">Belongs to the reaction center PufL/M/PsbA/D family.</text>
</comment>
<gene>
    <name evidence="1" type="primary">psbA</name>
</gene>
<protein>
    <recommendedName>
        <fullName evidence="1">Photosystem II protein D1</fullName>
        <shortName evidence="1">PSII D1 protein</shortName>
        <ecNumber evidence="1">1.10.3.9</ecNumber>
    </recommendedName>
    <alternativeName>
        <fullName evidence="3">32 kDa thylakoid membrane protein</fullName>
    </alternativeName>
    <alternativeName>
        <fullName evidence="1">Photosystem II Q(B) protein</fullName>
    </alternativeName>
</protein>
<organism>
    <name type="scientific">Nicotiana tabacum</name>
    <name type="common">Common tobacco</name>
    <dbReference type="NCBI Taxonomy" id="4097"/>
    <lineage>
        <taxon>Eukaryota</taxon>
        <taxon>Viridiplantae</taxon>
        <taxon>Streptophyta</taxon>
        <taxon>Embryophyta</taxon>
        <taxon>Tracheophyta</taxon>
        <taxon>Spermatophyta</taxon>
        <taxon>Magnoliopsida</taxon>
        <taxon>eudicotyledons</taxon>
        <taxon>Gunneridae</taxon>
        <taxon>Pentapetalae</taxon>
        <taxon>asterids</taxon>
        <taxon>lamiids</taxon>
        <taxon>Solanales</taxon>
        <taxon>Solanaceae</taxon>
        <taxon>Nicotianoideae</taxon>
        <taxon>Nicotianeae</taxon>
        <taxon>Nicotiana</taxon>
    </lineage>
</organism>
<geneLocation type="chloroplast"/>
<sequence>MTAILERRESESLWGRFCNWITSTENRLYIGWFGVLMIPTLLTATSVFIIAFIAAPPVDIDGIREPVSGSLLYGNNIISGAIIPTSAAIGLHFYPIWEAASVDEWLYNGGPYELIVLHFLLGVACYMGREWELSFRLGMRPWIAVAYSAPVAAATAVFLIYPIGQGSFSDGMPLGISGTFNFMIVFQAEHNILMHPFHMLGVAGVFGGSLFSAMHGSLVTSSLIRETTENESANEGYRFGQEEETYNIVAAHGYFGRLIFQYASFNNSRSLHFFLAAWPVVGIWFTALGISTMAFNLNGFNFNQSVVDSQGRVINTWADIINRANLGMEVMHERNAHNFPLDLAAIEAPSTNG</sequence>